<evidence type="ECO:0000269" key="1">
    <source>
    </source>
</evidence>
<evidence type="ECO:0000305" key="2"/>
<evidence type="ECO:0000305" key="3">
    <source>
    </source>
</evidence>
<keyword id="KW-0328">Glycosyltransferase</keyword>
<keyword id="KW-1185">Reference proteome</keyword>
<keyword id="KW-0808">Transferase</keyword>
<gene>
    <name type="primary">pglA</name>
    <name type="ordered locus">Cj1125c</name>
</gene>
<feature type="chain" id="PRO_0000422590" description="N,N'-diacetylbacillosaminyl-diphospho-undecaprenol alpha-1,3-N-acetylgalactosaminyltransferase">
    <location>
        <begin position="1"/>
        <end position="376"/>
    </location>
</feature>
<proteinExistence type="evidence at protein level"/>
<comment type="function">
    <text evidence="1">Adds the first GalNAc residue on to the isoprenoid-linked bacillosamine (2,4-diacetamido-2,4,6-trideoxyglucose) carrier in the N-linked protein glycosylation pathway. Acts first on the undecaprenylpyrophosphate-linked bacillosamine (Und-PP-Bac) substrate to yield the disaccharide.</text>
</comment>
<comment type="catalytic activity">
    <reaction evidence="1">
        <text>N,N'-diacetyl-alpha-D-bacillosaminyl-tri-trans,hepta-cis-undecaprenyl diphosphate + UDP-N-acetyl-alpha-D-galactosamine = N-acetyl-alpha-D-galactosaminyl-(1-&gt;3)-N,N'-diacetyl-alpha-D-bacillosaminyl-tri-trans,hepta-cis-undecaprenyl diphosphate + UDP + H(+)</text>
        <dbReference type="Rhea" id="RHEA:34511"/>
        <dbReference type="ChEBI" id="CHEBI:15378"/>
        <dbReference type="ChEBI" id="CHEBI:58223"/>
        <dbReference type="ChEBI" id="CHEBI:67138"/>
        <dbReference type="ChEBI" id="CHEBI:68652"/>
        <dbReference type="ChEBI" id="CHEBI:68672"/>
        <dbReference type="EC" id="2.4.1.290"/>
    </reaction>
</comment>
<comment type="pathway">
    <text evidence="1">Protein modification; protein glycosylation.</text>
</comment>
<comment type="miscellaneous">
    <text evidence="3">N-linked protein glycosylation in C.jejuni consists in the transfer of a heptasaccharide (GalNAc-alpha1,4-GalNAc-alpha1,4-(Glcbeta1,3)-GalNAc-alpha1,4-GalNAc-alpha1,4-GalNAc-alpha1,3-bacillosamine) from a membrane-anchored undecaprenylpyrophosphate (Und-PP)-linked donor to the Asn side chain of proteins at the Asn-X-Ser/Thr motif.</text>
</comment>
<comment type="similarity">
    <text evidence="2">Belongs to the glycosyltransferase group 1 family.</text>
</comment>
<sequence length="376" mass="42816">MRIGFLSHAGASIYHFRMPIIKALKDRKDEVFVIVPQDEYTQKLRDLGLKVIVYEFSRASLNPFVVLKNFFYLAKVLKNLNLDFIQSAAHKSNTFGILAAKWAKIPYRFALVEGLGSFYIDQGFKANLVRFVINSLYKLSFKFAHQFIFVNESNAEFMRNLGLKENKICVIKSVGINLKKFFPIYVESEKKELFWKNLNIDKKPIVLMIARALWHKGVKEFYESATMLKDKANFVLVGGRDENPSCASLEFLNSGAVHYLGARSDIVELLQNCDIFVLPSYKEGFPVSVLEAKACGKAIVVSDCEGCVEAISNAYDGLWAKTKNAKDLSEKISLLLEDEKLRLNLAKNAAQDALQYDENIIAQRYLKLYDRVIKNV</sequence>
<dbReference type="EC" id="2.4.1.290"/>
<dbReference type="EMBL" id="AL111168">
    <property type="protein sequence ID" value="CAL35242.1"/>
    <property type="molecule type" value="Genomic_DNA"/>
</dbReference>
<dbReference type="PIR" id="H81316">
    <property type="entry name" value="H81316"/>
</dbReference>
<dbReference type="RefSeq" id="WP_002852885.1">
    <property type="nucleotide sequence ID" value="NZ_SZUC01000001.1"/>
</dbReference>
<dbReference type="RefSeq" id="YP_002344518.1">
    <property type="nucleotide sequence ID" value="NC_002163.1"/>
</dbReference>
<dbReference type="SMR" id="Q0P9C9"/>
<dbReference type="IntAct" id="Q0P9C9">
    <property type="interactions" value="4"/>
</dbReference>
<dbReference type="STRING" id="192222.Cj1125c"/>
<dbReference type="CAZy" id="GT4">
    <property type="family name" value="Glycosyltransferase Family 4"/>
</dbReference>
<dbReference type="PaxDb" id="192222-Cj1125c"/>
<dbReference type="EnsemblBacteria" id="CAL35242">
    <property type="protein sequence ID" value="CAL35242"/>
    <property type="gene ID" value="Cj1125c"/>
</dbReference>
<dbReference type="GeneID" id="905416"/>
<dbReference type="KEGG" id="cje:Cj1125c"/>
<dbReference type="PATRIC" id="fig|192222.6.peg.1107"/>
<dbReference type="eggNOG" id="COG0438">
    <property type="taxonomic scope" value="Bacteria"/>
</dbReference>
<dbReference type="HOGENOM" id="CLU_009583_8_1_7"/>
<dbReference type="OrthoDB" id="9775208at2"/>
<dbReference type="BioCyc" id="MetaCyc:MONOMER-17322"/>
<dbReference type="UniPathway" id="UPA00378"/>
<dbReference type="Proteomes" id="UP000000799">
    <property type="component" value="Chromosome"/>
</dbReference>
<dbReference type="GO" id="GO:0016758">
    <property type="term" value="F:hexosyltransferase activity"/>
    <property type="evidence" value="ECO:0000314"/>
    <property type="project" value="UniProtKB"/>
</dbReference>
<dbReference type="GO" id="GO:0102335">
    <property type="term" value="F:N,N'-diacetylbacillosaminyl-diphospho-undecaprenol alpha-1,3-N-acetylgalactosaminyltransferase activity"/>
    <property type="evidence" value="ECO:0007669"/>
    <property type="project" value="UniProtKB-EC"/>
</dbReference>
<dbReference type="GO" id="GO:0009103">
    <property type="term" value="P:lipopolysaccharide biosynthetic process"/>
    <property type="evidence" value="ECO:0007669"/>
    <property type="project" value="TreeGrafter"/>
</dbReference>
<dbReference type="GO" id="GO:0018279">
    <property type="term" value="P:protein N-linked glycosylation via asparagine"/>
    <property type="evidence" value="ECO:0000314"/>
    <property type="project" value="UniProtKB"/>
</dbReference>
<dbReference type="CDD" id="cd03808">
    <property type="entry name" value="GT4_CapM-like"/>
    <property type="match status" value="1"/>
</dbReference>
<dbReference type="Gene3D" id="3.40.50.2000">
    <property type="entry name" value="Glycogen Phosphorylase B"/>
    <property type="match status" value="2"/>
</dbReference>
<dbReference type="InterPro" id="IPR001296">
    <property type="entry name" value="Glyco_trans_1"/>
</dbReference>
<dbReference type="InterPro" id="IPR028098">
    <property type="entry name" value="Glyco_trans_4-like_N"/>
</dbReference>
<dbReference type="PANTHER" id="PTHR46401">
    <property type="entry name" value="GLYCOSYLTRANSFERASE WBBK-RELATED"/>
    <property type="match status" value="1"/>
</dbReference>
<dbReference type="PANTHER" id="PTHR46401:SF2">
    <property type="entry name" value="GLYCOSYLTRANSFERASE WBBK-RELATED"/>
    <property type="match status" value="1"/>
</dbReference>
<dbReference type="Pfam" id="PF13439">
    <property type="entry name" value="Glyco_transf_4"/>
    <property type="match status" value="1"/>
</dbReference>
<dbReference type="Pfam" id="PF00534">
    <property type="entry name" value="Glycos_transf_1"/>
    <property type="match status" value="1"/>
</dbReference>
<dbReference type="SUPFAM" id="SSF53756">
    <property type="entry name" value="UDP-Glycosyltransferase/glycogen phosphorylase"/>
    <property type="match status" value="1"/>
</dbReference>
<name>PGLA_CAMJE</name>
<accession>Q0P9C9</accession>
<reference key="1">
    <citation type="journal article" date="2000" name="Nature">
        <title>The genome sequence of the food-borne pathogen Campylobacter jejuni reveals hypervariable sequences.</title>
        <authorList>
            <person name="Parkhill J."/>
            <person name="Wren B.W."/>
            <person name="Mungall K.L."/>
            <person name="Ketley J.M."/>
            <person name="Churcher C.M."/>
            <person name="Basham D."/>
            <person name="Chillingworth T."/>
            <person name="Davies R.M."/>
            <person name="Feltwell T."/>
            <person name="Holroyd S."/>
            <person name="Jagels K."/>
            <person name="Karlyshev A.V."/>
            <person name="Moule S."/>
            <person name="Pallen M.J."/>
            <person name="Penn C.W."/>
            <person name="Quail M.A."/>
            <person name="Rajandream M.A."/>
            <person name="Rutherford K.M."/>
            <person name="van Vliet A.H.M."/>
            <person name="Whitehead S."/>
            <person name="Barrell B.G."/>
        </authorList>
    </citation>
    <scope>NUCLEOTIDE SEQUENCE [LARGE SCALE GENOMIC DNA]</scope>
    <source>
        <strain>ATCC 700819 / NCTC 11168</strain>
    </source>
</reference>
<reference key="2">
    <citation type="journal article" date="2005" name="Proc. Natl. Acad. Sci. U.S.A.">
        <title>In vitro assembly of the undecaprenylpyrophosphate-linked heptasaccharide for prokaryotic N-linked glycosylation.</title>
        <authorList>
            <person name="Glover K.J."/>
            <person name="Weerapana E."/>
            <person name="Imperiali B."/>
        </authorList>
    </citation>
    <scope>FUNCTION</scope>
    <scope>CATALYTIC ACTIVITY</scope>
    <scope>PATHWAY</scope>
    <source>
        <strain>ATCC 700819 / NCTC 11168</strain>
    </source>
</reference>
<protein>
    <recommendedName>
        <fullName>N,N'-diacetylbacillosaminyl-diphospho-undecaprenol alpha-1,3-N-acetylgalactosaminyltransferase</fullName>
        <ecNumber>2.4.1.290</ecNumber>
    </recommendedName>
    <alternativeName>
        <fullName>Protein glycosylation A</fullName>
    </alternativeName>
</protein>
<organism>
    <name type="scientific">Campylobacter jejuni subsp. jejuni serotype O:2 (strain ATCC 700819 / NCTC 11168)</name>
    <dbReference type="NCBI Taxonomy" id="192222"/>
    <lineage>
        <taxon>Bacteria</taxon>
        <taxon>Pseudomonadati</taxon>
        <taxon>Campylobacterota</taxon>
        <taxon>Epsilonproteobacteria</taxon>
        <taxon>Campylobacterales</taxon>
        <taxon>Campylobacteraceae</taxon>
        <taxon>Campylobacter</taxon>
    </lineage>
</organism>